<proteinExistence type="inferred from homology"/>
<accession>A0LV48</accession>
<comment type="function">
    <text evidence="1">Specifically methylates position 2 of adenine 2503 in 23S rRNA and position 2 of adenine 37 in tRNAs.</text>
</comment>
<comment type="catalytic activity">
    <reaction evidence="1">
        <text>adenosine(2503) in 23S rRNA + 2 reduced [2Fe-2S]-[ferredoxin] + 2 S-adenosyl-L-methionine = 2-methyladenosine(2503) in 23S rRNA + 5'-deoxyadenosine + L-methionine + 2 oxidized [2Fe-2S]-[ferredoxin] + S-adenosyl-L-homocysteine</text>
        <dbReference type="Rhea" id="RHEA:42916"/>
        <dbReference type="Rhea" id="RHEA-COMP:10000"/>
        <dbReference type="Rhea" id="RHEA-COMP:10001"/>
        <dbReference type="Rhea" id="RHEA-COMP:10152"/>
        <dbReference type="Rhea" id="RHEA-COMP:10282"/>
        <dbReference type="ChEBI" id="CHEBI:17319"/>
        <dbReference type="ChEBI" id="CHEBI:33737"/>
        <dbReference type="ChEBI" id="CHEBI:33738"/>
        <dbReference type="ChEBI" id="CHEBI:57844"/>
        <dbReference type="ChEBI" id="CHEBI:57856"/>
        <dbReference type="ChEBI" id="CHEBI:59789"/>
        <dbReference type="ChEBI" id="CHEBI:74411"/>
        <dbReference type="ChEBI" id="CHEBI:74497"/>
        <dbReference type="EC" id="2.1.1.192"/>
    </reaction>
</comment>
<comment type="catalytic activity">
    <reaction evidence="1">
        <text>adenosine(37) in tRNA + 2 reduced [2Fe-2S]-[ferredoxin] + 2 S-adenosyl-L-methionine = 2-methyladenosine(37) in tRNA + 5'-deoxyadenosine + L-methionine + 2 oxidized [2Fe-2S]-[ferredoxin] + S-adenosyl-L-homocysteine</text>
        <dbReference type="Rhea" id="RHEA:43332"/>
        <dbReference type="Rhea" id="RHEA-COMP:10000"/>
        <dbReference type="Rhea" id="RHEA-COMP:10001"/>
        <dbReference type="Rhea" id="RHEA-COMP:10162"/>
        <dbReference type="Rhea" id="RHEA-COMP:10485"/>
        <dbReference type="ChEBI" id="CHEBI:17319"/>
        <dbReference type="ChEBI" id="CHEBI:33737"/>
        <dbReference type="ChEBI" id="CHEBI:33738"/>
        <dbReference type="ChEBI" id="CHEBI:57844"/>
        <dbReference type="ChEBI" id="CHEBI:57856"/>
        <dbReference type="ChEBI" id="CHEBI:59789"/>
        <dbReference type="ChEBI" id="CHEBI:74411"/>
        <dbReference type="ChEBI" id="CHEBI:74497"/>
        <dbReference type="EC" id="2.1.1.192"/>
    </reaction>
</comment>
<comment type="cofactor">
    <cofactor evidence="1">
        <name>[4Fe-4S] cluster</name>
        <dbReference type="ChEBI" id="CHEBI:49883"/>
    </cofactor>
    <text evidence="1">Binds 1 [4Fe-4S] cluster. The cluster is coordinated with 3 cysteines and an exchangeable S-adenosyl-L-methionine.</text>
</comment>
<comment type="subcellular location">
    <subcellularLocation>
        <location evidence="1">Cytoplasm</location>
    </subcellularLocation>
</comment>
<comment type="miscellaneous">
    <text evidence="1">Reaction proceeds by a ping-pong mechanism involving intermediate methylation of a conserved cysteine residue.</text>
</comment>
<comment type="similarity">
    <text evidence="1">Belongs to the radical SAM superfamily. RlmN family.</text>
</comment>
<protein>
    <recommendedName>
        <fullName evidence="1">Probable dual-specificity RNA methyltransferase RlmN</fullName>
        <ecNumber evidence="1">2.1.1.192</ecNumber>
    </recommendedName>
    <alternativeName>
        <fullName evidence="1">23S rRNA (adenine(2503)-C(2))-methyltransferase</fullName>
    </alternativeName>
    <alternativeName>
        <fullName evidence="1">23S rRNA m2A2503 methyltransferase</fullName>
    </alternativeName>
    <alternativeName>
        <fullName evidence="1">Ribosomal RNA large subunit methyltransferase N</fullName>
    </alternativeName>
    <alternativeName>
        <fullName evidence="1">tRNA (adenine(37)-C(2))-methyltransferase</fullName>
    </alternativeName>
    <alternativeName>
        <fullName evidence="1">tRNA m2A37 methyltransferase</fullName>
    </alternativeName>
</protein>
<dbReference type="EC" id="2.1.1.192" evidence="1"/>
<dbReference type="EMBL" id="CP000481">
    <property type="protein sequence ID" value="ABK53308.1"/>
    <property type="molecule type" value="Genomic_DNA"/>
</dbReference>
<dbReference type="SMR" id="A0LV48"/>
<dbReference type="FunCoup" id="A0LV48">
    <property type="interactions" value="215"/>
</dbReference>
<dbReference type="STRING" id="351607.Acel_1536"/>
<dbReference type="KEGG" id="ace:Acel_1536"/>
<dbReference type="eggNOG" id="COG0820">
    <property type="taxonomic scope" value="Bacteria"/>
</dbReference>
<dbReference type="HOGENOM" id="CLU_029101_0_2_11"/>
<dbReference type="InParanoid" id="A0LV48"/>
<dbReference type="OrthoDB" id="9793973at2"/>
<dbReference type="Proteomes" id="UP000008221">
    <property type="component" value="Chromosome"/>
</dbReference>
<dbReference type="GO" id="GO:0005737">
    <property type="term" value="C:cytoplasm"/>
    <property type="evidence" value="ECO:0007669"/>
    <property type="project" value="UniProtKB-SubCell"/>
</dbReference>
<dbReference type="GO" id="GO:0051539">
    <property type="term" value="F:4 iron, 4 sulfur cluster binding"/>
    <property type="evidence" value="ECO:0007669"/>
    <property type="project" value="UniProtKB-UniRule"/>
</dbReference>
<dbReference type="GO" id="GO:0046872">
    <property type="term" value="F:metal ion binding"/>
    <property type="evidence" value="ECO:0007669"/>
    <property type="project" value="UniProtKB-KW"/>
</dbReference>
<dbReference type="GO" id="GO:0070040">
    <property type="term" value="F:rRNA (adenine(2503)-C2-)-methyltransferase activity"/>
    <property type="evidence" value="ECO:0007669"/>
    <property type="project" value="UniProtKB-UniRule"/>
</dbReference>
<dbReference type="GO" id="GO:0019843">
    <property type="term" value="F:rRNA binding"/>
    <property type="evidence" value="ECO:0007669"/>
    <property type="project" value="UniProtKB-UniRule"/>
</dbReference>
<dbReference type="GO" id="GO:0002935">
    <property type="term" value="F:tRNA (adenine(37)-C2)-methyltransferase activity"/>
    <property type="evidence" value="ECO:0007669"/>
    <property type="project" value="UniProtKB-UniRule"/>
</dbReference>
<dbReference type="GO" id="GO:0000049">
    <property type="term" value="F:tRNA binding"/>
    <property type="evidence" value="ECO:0007669"/>
    <property type="project" value="UniProtKB-UniRule"/>
</dbReference>
<dbReference type="GO" id="GO:0070475">
    <property type="term" value="P:rRNA base methylation"/>
    <property type="evidence" value="ECO:0007669"/>
    <property type="project" value="UniProtKB-UniRule"/>
</dbReference>
<dbReference type="GO" id="GO:0030488">
    <property type="term" value="P:tRNA methylation"/>
    <property type="evidence" value="ECO:0007669"/>
    <property type="project" value="UniProtKB-UniRule"/>
</dbReference>
<dbReference type="CDD" id="cd01335">
    <property type="entry name" value="Radical_SAM"/>
    <property type="match status" value="1"/>
</dbReference>
<dbReference type="FunFam" id="3.20.20.70:FF:000014">
    <property type="entry name" value="Probable dual-specificity RNA methyltransferase RlmN"/>
    <property type="match status" value="1"/>
</dbReference>
<dbReference type="Gene3D" id="1.10.150.530">
    <property type="match status" value="1"/>
</dbReference>
<dbReference type="Gene3D" id="3.20.20.70">
    <property type="entry name" value="Aldolase class I"/>
    <property type="match status" value="1"/>
</dbReference>
<dbReference type="HAMAP" id="MF_01849">
    <property type="entry name" value="RNA_methyltr_RlmN"/>
    <property type="match status" value="1"/>
</dbReference>
<dbReference type="InterPro" id="IPR013785">
    <property type="entry name" value="Aldolase_TIM"/>
</dbReference>
<dbReference type="InterPro" id="IPR040072">
    <property type="entry name" value="Methyltransferase_A"/>
</dbReference>
<dbReference type="InterPro" id="IPR027492">
    <property type="entry name" value="RNA_MTrfase_RlmN"/>
</dbReference>
<dbReference type="InterPro" id="IPR004383">
    <property type="entry name" value="rRNA_lsu_MTrfase_RlmN/Cfr"/>
</dbReference>
<dbReference type="InterPro" id="IPR007197">
    <property type="entry name" value="rSAM"/>
</dbReference>
<dbReference type="NCBIfam" id="TIGR00048">
    <property type="entry name" value="rRNA_mod_RlmN"/>
    <property type="match status" value="1"/>
</dbReference>
<dbReference type="PANTHER" id="PTHR30544">
    <property type="entry name" value="23S RRNA METHYLTRANSFERASE"/>
    <property type="match status" value="1"/>
</dbReference>
<dbReference type="PANTHER" id="PTHR30544:SF5">
    <property type="entry name" value="RADICAL SAM CORE DOMAIN-CONTAINING PROTEIN"/>
    <property type="match status" value="1"/>
</dbReference>
<dbReference type="Pfam" id="PF04055">
    <property type="entry name" value="Radical_SAM"/>
    <property type="match status" value="1"/>
</dbReference>
<dbReference type="PIRSF" id="PIRSF006004">
    <property type="entry name" value="CHP00048"/>
    <property type="match status" value="1"/>
</dbReference>
<dbReference type="SFLD" id="SFLDF00275">
    <property type="entry name" value="adenosine_C2_methyltransferase"/>
    <property type="match status" value="1"/>
</dbReference>
<dbReference type="SFLD" id="SFLDG01062">
    <property type="entry name" value="methyltransferase_(Class_A)"/>
    <property type="match status" value="1"/>
</dbReference>
<dbReference type="SUPFAM" id="SSF102114">
    <property type="entry name" value="Radical SAM enzymes"/>
    <property type="match status" value="1"/>
</dbReference>
<dbReference type="PROSITE" id="PS51918">
    <property type="entry name" value="RADICAL_SAM"/>
    <property type="match status" value="1"/>
</dbReference>
<evidence type="ECO:0000255" key="1">
    <source>
        <dbReference type="HAMAP-Rule" id="MF_01849"/>
    </source>
</evidence>
<evidence type="ECO:0000255" key="2">
    <source>
        <dbReference type="PROSITE-ProRule" id="PRU01266"/>
    </source>
</evidence>
<feature type="chain" id="PRO_0000349994" description="Probable dual-specificity RNA methyltransferase RlmN">
    <location>
        <begin position="1"/>
        <end position="430"/>
    </location>
</feature>
<feature type="domain" description="Radical SAM core" evidence="2">
    <location>
        <begin position="152"/>
        <end position="395"/>
    </location>
</feature>
<feature type="active site" description="Proton acceptor" evidence="1">
    <location>
        <position position="125"/>
    </location>
</feature>
<feature type="active site" description="S-methylcysteine intermediate" evidence="1">
    <location>
        <position position="400"/>
    </location>
</feature>
<feature type="binding site" evidence="1">
    <location>
        <position position="166"/>
    </location>
    <ligand>
        <name>[4Fe-4S] cluster</name>
        <dbReference type="ChEBI" id="CHEBI:49883"/>
        <note>4Fe-4S-S-AdoMet</note>
    </ligand>
</feature>
<feature type="binding site" evidence="1">
    <location>
        <position position="170"/>
    </location>
    <ligand>
        <name>[4Fe-4S] cluster</name>
        <dbReference type="ChEBI" id="CHEBI:49883"/>
        <note>4Fe-4S-S-AdoMet</note>
    </ligand>
</feature>
<feature type="binding site" evidence="1">
    <location>
        <position position="173"/>
    </location>
    <ligand>
        <name>[4Fe-4S] cluster</name>
        <dbReference type="ChEBI" id="CHEBI:49883"/>
        <note>4Fe-4S-S-AdoMet</note>
    </ligand>
</feature>
<feature type="binding site" evidence="1">
    <location>
        <begin position="221"/>
        <end position="222"/>
    </location>
    <ligand>
        <name>S-adenosyl-L-methionine</name>
        <dbReference type="ChEBI" id="CHEBI:59789"/>
    </ligand>
</feature>
<feature type="binding site" evidence="1">
    <location>
        <position position="255"/>
    </location>
    <ligand>
        <name>S-adenosyl-L-methionine</name>
        <dbReference type="ChEBI" id="CHEBI:59789"/>
    </ligand>
</feature>
<feature type="binding site" evidence="1">
    <location>
        <begin position="278"/>
        <end position="280"/>
    </location>
    <ligand>
        <name>S-adenosyl-L-methionine</name>
        <dbReference type="ChEBI" id="CHEBI:59789"/>
    </ligand>
</feature>
<feature type="binding site" evidence="1">
    <location>
        <position position="357"/>
    </location>
    <ligand>
        <name>S-adenosyl-L-methionine</name>
        <dbReference type="ChEBI" id="CHEBI:59789"/>
    </ligand>
</feature>
<feature type="disulfide bond" description="(transient)" evidence="1">
    <location>
        <begin position="159"/>
        <end position="400"/>
    </location>
</feature>
<reference key="1">
    <citation type="journal article" date="2009" name="Genome Res.">
        <title>Complete genome of the cellulolytic thermophile Acidothermus cellulolyticus 11B provides insights into its ecophysiological and evolutionary adaptations.</title>
        <authorList>
            <person name="Barabote R.D."/>
            <person name="Xie G."/>
            <person name="Leu D.H."/>
            <person name="Normand P."/>
            <person name="Necsulea A."/>
            <person name="Daubin V."/>
            <person name="Medigue C."/>
            <person name="Adney W.S."/>
            <person name="Xu X.C."/>
            <person name="Lapidus A."/>
            <person name="Parales R.E."/>
            <person name="Detter C."/>
            <person name="Pujic P."/>
            <person name="Bruce D."/>
            <person name="Lavire C."/>
            <person name="Challacombe J.F."/>
            <person name="Brettin T.S."/>
            <person name="Berry A.M."/>
        </authorList>
    </citation>
    <scope>NUCLEOTIDE SEQUENCE [LARGE SCALE GENOMIC DNA]</scope>
    <source>
        <strain>ATCC 43068 / DSM 8971 / 11B</strain>
    </source>
</reference>
<name>RLMN_ACIC1</name>
<sequence>MPAGRAVSGRLENDMTTHAMTDAARAGAVTRRGVPRHLADFSLAERRRWVAELGEPSFRAVQISAHYFGRLTENPDEMTDLPASSRRELVGVLLPPLLRPVRELACDNGLTRKILWRLSDGAYVESVLMRYPPRHSRHAALGAEADADGGSRHGRVTLCVSSQAGCGMGCPFCATGQAGLVRNLSAAEIVAQVAVAARTVARGEMAGGPGRLSNVVFMGMGEPLANYRSVVDAVRRITEPPPEGLGISQRSVTVSTVGLVPAIERLATEGLAVTLAVSLHAPDDELRNVLVPINRRWPVRDVLGAAARYAEVTKRRVSVEYALIRDVNDQPWRADALAAQVKEFLGRLGHVNLIPLNPTPGSPWTASTPRAQAEFVRRLAAAGVTVTVRDTRGREVNGACGQLAATVEFRGRTVQETPAPSMAALDDAVR</sequence>
<gene>
    <name evidence="1" type="primary">rlmN</name>
    <name type="ordered locus">Acel_1536</name>
</gene>
<keyword id="KW-0004">4Fe-4S</keyword>
<keyword id="KW-0963">Cytoplasm</keyword>
<keyword id="KW-1015">Disulfide bond</keyword>
<keyword id="KW-0408">Iron</keyword>
<keyword id="KW-0411">Iron-sulfur</keyword>
<keyword id="KW-0479">Metal-binding</keyword>
<keyword id="KW-0489">Methyltransferase</keyword>
<keyword id="KW-1185">Reference proteome</keyword>
<keyword id="KW-0698">rRNA processing</keyword>
<keyword id="KW-0949">S-adenosyl-L-methionine</keyword>
<keyword id="KW-0808">Transferase</keyword>
<keyword id="KW-0819">tRNA processing</keyword>
<organism>
    <name type="scientific">Acidothermus cellulolyticus (strain ATCC 43068 / DSM 8971 / 11B)</name>
    <dbReference type="NCBI Taxonomy" id="351607"/>
    <lineage>
        <taxon>Bacteria</taxon>
        <taxon>Bacillati</taxon>
        <taxon>Actinomycetota</taxon>
        <taxon>Actinomycetes</taxon>
        <taxon>Acidothermales</taxon>
        <taxon>Acidothermaceae</taxon>
        <taxon>Acidothermus</taxon>
    </lineage>
</organism>